<sequence length="60" mass="6756">MAVQQNKKSRSARDMRRSHDALSENALSVEKTTGEVHLRHHVSPEGVYRGRKVVDKGADE</sequence>
<keyword id="KW-1185">Reference proteome</keyword>
<keyword id="KW-0687">Ribonucleoprotein</keyword>
<keyword id="KW-0689">Ribosomal protein</keyword>
<accession>Q88LL9</accession>
<name>RL32_PSEPK</name>
<organism>
    <name type="scientific">Pseudomonas putida (strain ATCC 47054 / DSM 6125 / CFBP 8728 / NCIMB 11950 / KT2440)</name>
    <dbReference type="NCBI Taxonomy" id="160488"/>
    <lineage>
        <taxon>Bacteria</taxon>
        <taxon>Pseudomonadati</taxon>
        <taxon>Pseudomonadota</taxon>
        <taxon>Gammaproteobacteria</taxon>
        <taxon>Pseudomonadales</taxon>
        <taxon>Pseudomonadaceae</taxon>
        <taxon>Pseudomonas</taxon>
    </lineage>
</organism>
<comment type="similarity">
    <text evidence="2">Belongs to the bacterial ribosomal protein bL32 family.</text>
</comment>
<dbReference type="EMBL" id="AE015451">
    <property type="protein sequence ID" value="AAN67529.1"/>
    <property type="molecule type" value="Genomic_DNA"/>
</dbReference>
<dbReference type="RefSeq" id="NP_744065.1">
    <property type="nucleotide sequence ID" value="NC_002947.4"/>
</dbReference>
<dbReference type="RefSeq" id="WP_003247154.1">
    <property type="nucleotide sequence ID" value="NZ_CP169744.1"/>
</dbReference>
<dbReference type="SMR" id="Q88LL9"/>
<dbReference type="STRING" id="160488.PP_1911"/>
<dbReference type="PaxDb" id="160488-PP_1911"/>
<dbReference type="GeneID" id="97166971"/>
<dbReference type="KEGG" id="ppu:PP_1911"/>
<dbReference type="PATRIC" id="fig|160488.4.peg.2019"/>
<dbReference type="eggNOG" id="COG0333">
    <property type="taxonomic scope" value="Bacteria"/>
</dbReference>
<dbReference type="HOGENOM" id="CLU_129084_2_1_6"/>
<dbReference type="OrthoDB" id="9801927at2"/>
<dbReference type="PhylomeDB" id="Q88LL9"/>
<dbReference type="BioCyc" id="PPUT160488:G1G01-2023-MONOMER"/>
<dbReference type="Proteomes" id="UP000000556">
    <property type="component" value="Chromosome"/>
</dbReference>
<dbReference type="GO" id="GO:0015934">
    <property type="term" value="C:large ribosomal subunit"/>
    <property type="evidence" value="ECO:0007669"/>
    <property type="project" value="InterPro"/>
</dbReference>
<dbReference type="GO" id="GO:0003735">
    <property type="term" value="F:structural constituent of ribosome"/>
    <property type="evidence" value="ECO:0007669"/>
    <property type="project" value="InterPro"/>
</dbReference>
<dbReference type="GO" id="GO:0006412">
    <property type="term" value="P:translation"/>
    <property type="evidence" value="ECO:0007669"/>
    <property type="project" value="UniProtKB-UniRule"/>
</dbReference>
<dbReference type="HAMAP" id="MF_00340">
    <property type="entry name" value="Ribosomal_bL32"/>
    <property type="match status" value="1"/>
</dbReference>
<dbReference type="InterPro" id="IPR002677">
    <property type="entry name" value="Ribosomal_bL32"/>
</dbReference>
<dbReference type="InterPro" id="IPR044957">
    <property type="entry name" value="Ribosomal_bL32_bact"/>
</dbReference>
<dbReference type="InterPro" id="IPR011332">
    <property type="entry name" value="Ribosomal_zn-bd"/>
</dbReference>
<dbReference type="NCBIfam" id="TIGR01031">
    <property type="entry name" value="rpmF_bact"/>
    <property type="match status" value="1"/>
</dbReference>
<dbReference type="PANTHER" id="PTHR35534">
    <property type="entry name" value="50S RIBOSOMAL PROTEIN L32"/>
    <property type="match status" value="1"/>
</dbReference>
<dbReference type="PANTHER" id="PTHR35534:SF1">
    <property type="entry name" value="LARGE RIBOSOMAL SUBUNIT PROTEIN BL32"/>
    <property type="match status" value="1"/>
</dbReference>
<dbReference type="Pfam" id="PF01783">
    <property type="entry name" value="Ribosomal_L32p"/>
    <property type="match status" value="1"/>
</dbReference>
<dbReference type="SUPFAM" id="SSF57829">
    <property type="entry name" value="Zn-binding ribosomal proteins"/>
    <property type="match status" value="1"/>
</dbReference>
<evidence type="ECO:0000250" key="1"/>
<evidence type="ECO:0000255" key="2">
    <source>
        <dbReference type="HAMAP-Rule" id="MF_00340"/>
    </source>
</evidence>
<evidence type="ECO:0000256" key="3">
    <source>
        <dbReference type="SAM" id="MobiDB-lite"/>
    </source>
</evidence>
<evidence type="ECO:0000305" key="4"/>
<reference key="1">
    <citation type="journal article" date="2002" name="Environ. Microbiol.">
        <title>Complete genome sequence and comparative analysis of the metabolically versatile Pseudomonas putida KT2440.</title>
        <authorList>
            <person name="Nelson K.E."/>
            <person name="Weinel C."/>
            <person name="Paulsen I.T."/>
            <person name="Dodson R.J."/>
            <person name="Hilbert H."/>
            <person name="Martins dos Santos V.A.P."/>
            <person name="Fouts D.E."/>
            <person name="Gill S.R."/>
            <person name="Pop M."/>
            <person name="Holmes M."/>
            <person name="Brinkac L.M."/>
            <person name="Beanan M.J."/>
            <person name="DeBoy R.T."/>
            <person name="Daugherty S.C."/>
            <person name="Kolonay J.F."/>
            <person name="Madupu R."/>
            <person name="Nelson W.C."/>
            <person name="White O."/>
            <person name="Peterson J.D."/>
            <person name="Khouri H.M."/>
            <person name="Hance I."/>
            <person name="Chris Lee P."/>
            <person name="Holtzapple E.K."/>
            <person name="Scanlan D."/>
            <person name="Tran K."/>
            <person name="Moazzez A."/>
            <person name="Utterback T.R."/>
            <person name="Rizzo M."/>
            <person name="Lee K."/>
            <person name="Kosack D."/>
            <person name="Moestl D."/>
            <person name="Wedler H."/>
            <person name="Lauber J."/>
            <person name="Stjepandic D."/>
            <person name="Hoheisel J."/>
            <person name="Straetz M."/>
            <person name="Heim S."/>
            <person name="Kiewitz C."/>
            <person name="Eisen J.A."/>
            <person name="Timmis K.N."/>
            <person name="Duesterhoeft A."/>
            <person name="Tuemmler B."/>
            <person name="Fraser C.M."/>
        </authorList>
    </citation>
    <scope>NUCLEOTIDE SEQUENCE [LARGE SCALE GENOMIC DNA]</scope>
    <source>
        <strain>ATCC 47054 / DSM 6125 / CFBP 8728 / NCIMB 11950 / KT2440</strain>
    </source>
</reference>
<gene>
    <name evidence="2" type="primary">rpmF</name>
    <name type="ordered locus">PP_1911</name>
</gene>
<feature type="initiator methionine" description="Removed" evidence="1">
    <location>
        <position position="1"/>
    </location>
</feature>
<feature type="chain" id="PRO_0000172389" description="Large ribosomal subunit protein bL32">
    <location>
        <begin position="2"/>
        <end position="60"/>
    </location>
</feature>
<feature type="region of interest" description="Disordered" evidence="3">
    <location>
        <begin position="1"/>
        <end position="60"/>
    </location>
</feature>
<feature type="compositionally biased region" description="Basic and acidic residues" evidence="3">
    <location>
        <begin position="11"/>
        <end position="22"/>
    </location>
</feature>
<proteinExistence type="inferred from homology"/>
<protein>
    <recommendedName>
        <fullName evidence="2">Large ribosomal subunit protein bL32</fullName>
    </recommendedName>
    <alternativeName>
        <fullName evidence="4">50S ribosomal protein L32</fullName>
    </alternativeName>
</protein>